<accession>Q66JV7</accession>
<accession>Q3V1T6</accession>
<accession>Q8K281</accession>
<comment type="alternative products">
    <event type="alternative splicing"/>
    <isoform>
        <id>Q66JV7-1</id>
        <name>1</name>
        <sequence type="displayed"/>
    </isoform>
    <isoform>
        <id>Q66JV7-2</id>
        <name>2</name>
        <sequence type="described" ref="VSP_024877"/>
    </isoform>
</comment>
<comment type="sequence caution" evidence="3">
    <conflict type="erroneous initiation">
        <sequence resource="EMBL-CDS" id="AAH32212"/>
    </conflict>
</comment>
<name>CH058_MOUSE</name>
<sequence>MLSRRRVFAVERLGGRDGAFEDLAQGCVVPGVTCTYRRIPDNTHECSLDFREGQNELRGLERQMPLLKLASQDSGMEMVVGDSSLATLSGLSQDSLNLEPMGSPELPPAQLDRLLARQKLEEVLERSREFPSLSAQRGPLQLLNKPVDGVPIFAGEQESTEADTELEAGLEEAKEVGNMESAACTCLPGQGLRYLEHLCLVLEQMVRLQQLYLQLQTQRPSRDPEEEVLAPALSSSHIPDNRVQEHREELSQTKDPEGAEAASLPEVGVLVTSPSRLPEALLEPTHILPPSQEPKDLSHWDKVKVLLNRLRWRSPRLPEPPVPPDGSGSRMEFRNLSDRTPCHSQRKTFIPALVVKKPRAKNLSV</sequence>
<proteinExistence type="evidence at transcript level"/>
<dbReference type="EMBL" id="AK132259">
    <property type="protein sequence ID" value="BAE21063.1"/>
    <property type="molecule type" value="mRNA"/>
</dbReference>
<dbReference type="EMBL" id="BC032212">
    <property type="protein sequence ID" value="AAH32212.1"/>
    <property type="status" value="ALT_INIT"/>
    <property type="molecule type" value="mRNA"/>
</dbReference>
<dbReference type="EMBL" id="BC080738">
    <property type="protein sequence ID" value="AAH80738.1"/>
    <property type="molecule type" value="mRNA"/>
</dbReference>
<dbReference type="CCDS" id="CCDS36967.1">
    <molecule id="Q66JV7-2"/>
</dbReference>
<dbReference type="CCDS" id="CCDS49535.1">
    <molecule id="Q66JV7-1"/>
</dbReference>
<dbReference type="RefSeq" id="NP_001004155.2">
    <molecule id="Q66JV7-2"/>
    <property type="nucleotide sequence ID" value="NM_001004155.2"/>
</dbReference>
<dbReference type="RefSeq" id="NP_001106206.1">
    <molecule id="Q66JV7-1"/>
    <property type="nucleotide sequence ID" value="NM_001112735.1"/>
</dbReference>
<dbReference type="FunCoup" id="Q66JV7">
    <property type="interactions" value="82"/>
</dbReference>
<dbReference type="PhosphoSitePlus" id="Q66JV7"/>
<dbReference type="PaxDb" id="10090-ENSMUSP00000061834"/>
<dbReference type="DNASU" id="268759"/>
<dbReference type="Ensembl" id="ENSMUST00000058240.14">
    <molecule id="Q66JV7-2"/>
    <property type="protein sequence ID" value="ENSMUSP00000061834.8"/>
    <property type="gene ID" value="ENSMUSG00000044551.14"/>
</dbReference>
<dbReference type="Ensembl" id="ENSMUST00000153871.2">
    <molecule id="Q66JV7-1"/>
    <property type="protein sequence ID" value="ENSMUSP00000122309.2"/>
    <property type="gene ID" value="ENSMUSG00000044551.14"/>
</dbReference>
<dbReference type="GeneID" id="268759"/>
<dbReference type="KEGG" id="mmu:268759"/>
<dbReference type="UCSC" id="uc007ung.2">
    <molecule id="Q66JV7-2"/>
    <property type="organism name" value="mouse"/>
</dbReference>
<dbReference type="UCSC" id="uc007unh.2">
    <molecule id="Q66JV7-1"/>
    <property type="organism name" value="mouse"/>
</dbReference>
<dbReference type="AGR" id="MGI:2145726"/>
<dbReference type="MGI" id="MGI:2145726">
    <property type="gene designation" value="9930012K11Rik"/>
</dbReference>
<dbReference type="VEuPathDB" id="HostDB:ENSMUSG00000044551"/>
<dbReference type="eggNOG" id="ENOG502RG07">
    <property type="taxonomic scope" value="Eukaryota"/>
</dbReference>
<dbReference type="GeneTree" id="ENSGT00390000000531"/>
<dbReference type="HOGENOM" id="CLU_067480_0_0_1"/>
<dbReference type="InParanoid" id="Q66JV7"/>
<dbReference type="OMA" id="IRWRSPK"/>
<dbReference type="OrthoDB" id="9943553at2759"/>
<dbReference type="PhylomeDB" id="Q66JV7"/>
<dbReference type="TreeFam" id="TF337357"/>
<dbReference type="BioGRID-ORCS" id="268759">
    <property type="hits" value="3 hits in 77 CRISPR screens"/>
</dbReference>
<dbReference type="PRO" id="PR:Q66JV7"/>
<dbReference type="Proteomes" id="UP000000589">
    <property type="component" value="Chromosome 14"/>
</dbReference>
<dbReference type="RNAct" id="Q66JV7">
    <property type="molecule type" value="protein"/>
</dbReference>
<dbReference type="Bgee" id="ENSMUSG00000044551">
    <property type="expression patterns" value="Expressed in placenta labyrinth and 146 other cell types or tissues"/>
</dbReference>
<dbReference type="ExpressionAtlas" id="Q66JV7">
    <property type="expression patterns" value="baseline and differential"/>
</dbReference>
<dbReference type="InterPro" id="IPR027958">
    <property type="entry name" value="DUF4657"/>
</dbReference>
<dbReference type="PANTHER" id="PTHR37336">
    <property type="entry name" value="SIMILAR TO 9930012K11RIK PROTEIN"/>
    <property type="match status" value="1"/>
</dbReference>
<dbReference type="PANTHER" id="PTHR37336:SF1">
    <property type="entry name" value="SIMILAR TO 9930012K11RIK PROTEIN"/>
    <property type="match status" value="1"/>
</dbReference>
<dbReference type="Pfam" id="PF15552">
    <property type="entry name" value="DUF4657"/>
    <property type="match status" value="1"/>
</dbReference>
<keyword id="KW-0025">Alternative splicing</keyword>
<keyword id="KW-1185">Reference proteome</keyword>
<organism>
    <name type="scientific">Mus musculus</name>
    <name type="common">Mouse</name>
    <dbReference type="NCBI Taxonomy" id="10090"/>
    <lineage>
        <taxon>Eukaryota</taxon>
        <taxon>Metazoa</taxon>
        <taxon>Chordata</taxon>
        <taxon>Craniata</taxon>
        <taxon>Vertebrata</taxon>
        <taxon>Euteleostomi</taxon>
        <taxon>Mammalia</taxon>
        <taxon>Eutheria</taxon>
        <taxon>Euarchontoglires</taxon>
        <taxon>Glires</taxon>
        <taxon>Rodentia</taxon>
        <taxon>Myomorpha</taxon>
        <taxon>Muroidea</taxon>
        <taxon>Muridae</taxon>
        <taxon>Murinae</taxon>
        <taxon>Mus</taxon>
        <taxon>Mus</taxon>
    </lineage>
</organism>
<reference key="1">
    <citation type="journal article" date="2005" name="Science">
        <title>The transcriptional landscape of the mammalian genome.</title>
        <authorList>
            <person name="Carninci P."/>
            <person name="Kasukawa T."/>
            <person name="Katayama S."/>
            <person name="Gough J."/>
            <person name="Frith M.C."/>
            <person name="Maeda N."/>
            <person name="Oyama R."/>
            <person name="Ravasi T."/>
            <person name="Lenhard B."/>
            <person name="Wells C."/>
            <person name="Kodzius R."/>
            <person name="Shimokawa K."/>
            <person name="Bajic V.B."/>
            <person name="Brenner S.E."/>
            <person name="Batalov S."/>
            <person name="Forrest A.R."/>
            <person name="Zavolan M."/>
            <person name="Davis M.J."/>
            <person name="Wilming L.G."/>
            <person name="Aidinis V."/>
            <person name="Allen J.E."/>
            <person name="Ambesi-Impiombato A."/>
            <person name="Apweiler R."/>
            <person name="Aturaliya R.N."/>
            <person name="Bailey T.L."/>
            <person name="Bansal M."/>
            <person name="Baxter L."/>
            <person name="Beisel K.W."/>
            <person name="Bersano T."/>
            <person name="Bono H."/>
            <person name="Chalk A.M."/>
            <person name="Chiu K.P."/>
            <person name="Choudhary V."/>
            <person name="Christoffels A."/>
            <person name="Clutterbuck D.R."/>
            <person name="Crowe M.L."/>
            <person name="Dalla E."/>
            <person name="Dalrymple B.P."/>
            <person name="de Bono B."/>
            <person name="Della Gatta G."/>
            <person name="di Bernardo D."/>
            <person name="Down T."/>
            <person name="Engstrom P."/>
            <person name="Fagiolini M."/>
            <person name="Faulkner G."/>
            <person name="Fletcher C.F."/>
            <person name="Fukushima T."/>
            <person name="Furuno M."/>
            <person name="Futaki S."/>
            <person name="Gariboldi M."/>
            <person name="Georgii-Hemming P."/>
            <person name="Gingeras T.R."/>
            <person name="Gojobori T."/>
            <person name="Green R.E."/>
            <person name="Gustincich S."/>
            <person name="Harbers M."/>
            <person name="Hayashi Y."/>
            <person name="Hensch T.K."/>
            <person name="Hirokawa N."/>
            <person name="Hill D."/>
            <person name="Huminiecki L."/>
            <person name="Iacono M."/>
            <person name="Ikeo K."/>
            <person name="Iwama A."/>
            <person name="Ishikawa T."/>
            <person name="Jakt M."/>
            <person name="Kanapin A."/>
            <person name="Katoh M."/>
            <person name="Kawasawa Y."/>
            <person name="Kelso J."/>
            <person name="Kitamura H."/>
            <person name="Kitano H."/>
            <person name="Kollias G."/>
            <person name="Krishnan S.P."/>
            <person name="Kruger A."/>
            <person name="Kummerfeld S.K."/>
            <person name="Kurochkin I.V."/>
            <person name="Lareau L.F."/>
            <person name="Lazarevic D."/>
            <person name="Lipovich L."/>
            <person name="Liu J."/>
            <person name="Liuni S."/>
            <person name="McWilliam S."/>
            <person name="Madan Babu M."/>
            <person name="Madera M."/>
            <person name="Marchionni L."/>
            <person name="Matsuda H."/>
            <person name="Matsuzawa S."/>
            <person name="Miki H."/>
            <person name="Mignone F."/>
            <person name="Miyake S."/>
            <person name="Morris K."/>
            <person name="Mottagui-Tabar S."/>
            <person name="Mulder N."/>
            <person name="Nakano N."/>
            <person name="Nakauchi H."/>
            <person name="Ng P."/>
            <person name="Nilsson R."/>
            <person name="Nishiguchi S."/>
            <person name="Nishikawa S."/>
            <person name="Nori F."/>
            <person name="Ohara O."/>
            <person name="Okazaki Y."/>
            <person name="Orlando V."/>
            <person name="Pang K.C."/>
            <person name="Pavan W.J."/>
            <person name="Pavesi G."/>
            <person name="Pesole G."/>
            <person name="Petrovsky N."/>
            <person name="Piazza S."/>
            <person name="Reed J."/>
            <person name="Reid J.F."/>
            <person name="Ring B.Z."/>
            <person name="Ringwald M."/>
            <person name="Rost B."/>
            <person name="Ruan Y."/>
            <person name="Salzberg S.L."/>
            <person name="Sandelin A."/>
            <person name="Schneider C."/>
            <person name="Schoenbach C."/>
            <person name="Sekiguchi K."/>
            <person name="Semple C.A."/>
            <person name="Seno S."/>
            <person name="Sessa L."/>
            <person name="Sheng Y."/>
            <person name="Shibata Y."/>
            <person name="Shimada H."/>
            <person name="Shimada K."/>
            <person name="Silva D."/>
            <person name="Sinclair B."/>
            <person name="Sperling S."/>
            <person name="Stupka E."/>
            <person name="Sugiura K."/>
            <person name="Sultana R."/>
            <person name="Takenaka Y."/>
            <person name="Taki K."/>
            <person name="Tammoja K."/>
            <person name="Tan S.L."/>
            <person name="Tang S."/>
            <person name="Taylor M.S."/>
            <person name="Tegner J."/>
            <person name="Teichmann S.A."/>
            <person name="Ueda H.R."/>
            <person name="van Nimwegen E."/>
            <person name="Verardo R."/>
            <person name="Wei C.L."/>
            <person name="Yagi K."/>
            <person name="Yamanishi H."/>
            <person name="Zabarovsky E."/>
            <person name="Zhu S."/>
            <person name="Zimmer A."/>
            <person name="Hide W."/>
            <person name="Bult C."/>
            <person name="Grimmond S.M."/>
            <person name="Teasdale R.D."/>
            <person name="Liu E.T."/>
            <person name="Brusic V."/>
            <person name="Quackenbush J."/>
            <person name="Wahlestedt C."/>
            <person name="Mattick J.S."/>
            <person name="Hume D.A."/>
            <person name="Kai C."/>
            <person name="Sasaki D."/>
            <person name="Tomaru Y."/>
            <person name="Fukuda S."/>
            <person name="Kanamori-Katayama M."/>
            <person name="Suzuki M."/>
            <person name="Aoki J."/>
            <person name="Arakawa T."/>
            <person name="Iida J."/>
            <person name="Imamura K."/>
            <person name="Itoh M."/>
            <person name="Kato T."/>
            <person name="Kawaji H."/>
            <person name="Kawagashira N."/>
            <person name="Kawashima T."/>
            <person name="Kojima M."/>
            <person name="Kondo S."/>
            <person name="Konno H."/>
            <person name="Nakano K."/>
            <person name="Ninomiya N."/>
            <person name="Nishio T."/>
            <person name="Okada M."/>
            <person name="Plessy C."/>
            <person name="Shibata K."/>
            <person name="Shiraki T."/>
            <person name="Suzuki S."/>
            <person name="Tagami M."/>
            <person name="Waki K."/>
            <person name="Watahiki A."/>
            <person name="Okamura-Oho Y."/>
            <person name="Suzuki H."/>
            <person name="Kawai J."/>
            <person name="Hayashizaki Y."/>
        </authorList>
    </citation>
    <scope>NUCLEOTIDE SEQUENCE [LARGE SCALE MRNA] (ISOFORM 1)</scope>
    <source>
        <strain>C57BL/6J</strain>
        <tissue>Placenta</tissue>
    </source>
</reference>
<reference key="2">
    <citation type="journal article" date="2004" name="Genome Res.">
        <title>The status, quality, and expansion of the NIH full-length cDNA project: the Mammalian Gene Collection (MGC).</title>
        <authorList>
            <consortium name="The MGC Project Team"/>
        </authorList>
    </citation>
    <scope>NUCLEOTIDE SEQUENCE [LARGE SCALE MRNA] (ISOFORM 2)</scope>
    <source>
        <strain>C57BL/6J</strain>
        <strain>FVB/N</strain>
        <tissue>Embryo</tissue>
        <tissue>Mammary tumor</tissue>
    </source>
</reference>
<evidence type="ECO:0000256" key="1">
    <source>
        <dbReference type="SAM" id="MobiDB-lite"/>
    </source>
</evidence>
<evidence type="ECO:0000303" key="2">
    <source>
    </source>
</evidence>
<evidence type="ECO:0000305" key="3"/>
<protein>
    <recommendedName>
        <fullName>Uncharacterized protein C8orf58 homolog</fullName>
    </recommendedName>
</protein>
<feature type="chain" id="PRO_0000285641" description="Uncharacterized protein C8orf58 homolog">
    <location>
        <begin position="1"/>
        <end position="365"/>
    </location>
</feature>
<feature type="region of interest" description="Disordered" evidence="1">
    <location>
        <begin position="218"/>
        <end position="262"/>
    </location>
</feature>
<feature type="region of interest" description="Disordered" evidence="1">
    <location>
        <begin position="315"/>
        <end position="342"/>
    </location>
</feature>
<feature type="compositionally biased region" description="Basic and acidic residues" evidence="1">
    <location>
        <begin position="239"/>
        <end position="257"/>
    </location>
</feature>
<feature type="compositionally biased region" description="Basic and acidic residues" evidence="1">
    <location>
        <begin position="331"/>
        <end position="341"/>
    </location>
</feature>
<feature type="splice variant" id="VSP_024877" description="In isoform 2." evidence="2">
    <original>K</original>
    <variation>KQ</variation>
    <location>
        <position position="295"/>
    </location>
</feature>
<feature type="sequence conflict" description="In Ref. 2; AAH80738." evidence="3" ref="2">
    <original>L</original>
    <variation>R</variation>
    <location>
        <position position="91"/>
    </location>
</feature>
<feature type="sequence conflict" description="In Ref. 2; AAH80738." evidence="3" ref="2">
    <original>IL</original>
    <variation>VH</variation>
    <location>
        <begin position="287"/>
        <end position="288"/>
    </location>
</feature>